<comment type="function">
    <text evidence="2">Part of the ABC transporter complex YclNOPQ involved in uptake of ferric-petrobactin. Petrobactin is a photoreactive 3,4-catecholate siderophore produced by many members of the B.cereus group, including B.anthracis. Probably responsible for energy coupling to the transport system.</text>
</comment>
<comment type="catalytic activity">
    <reaction evidence="4">
        <text>a Fe(III)-siderophore(out) + ATP + H2O = a Fe(III)-siderophore(in) + ADP + phosphate + H(+)</text>
        <dbReference type="Rhea" id="RHEA:15597"/>
        <dbReference type="Rhea" id="RHEA-COMP:11342"/>
        <dbReference type="ChEBI" id="CHEBI:15377"/>
        <dbReference type="ChEBI" id="CHEBI:15378"/>
        <dbReference type="ChEBI" id="CHEBI:29034"/>
        <dbReference type="ChEBI" id="CHEBI:30616"/>
        <dbReference type="ChEBI" id="CHEBI:43474"/>
        <dbReference type="ChEBI" id="CHEBI:456216"/>
    </reaction>
</comment>
<comment type="subunit">
    <text evidence="4">The complex is composed of two ATP-binding proteins (YclP), two transmembrane proteins (YclN and YclO) and a solute-binding protein (YclQ).</text>
</comment>
<comment type="subcellular location">
    <subcellularLocation>
        <location evidence="3">Cell membrane</location>
        <topology evidence="3">Peripheral membrane protein</topology>
    </subcellularLocation>
</comment>
<comment type="disruption phenotype">
    <text evidence="2">Disruption mutants are unable to use petrobactin for iron delivery and growth.</text>
</comment>
<comment type="similarity">
    <text evidence="3">Belongs to the ABC transporter superfamily.</text>
</comment>
<dbReference type="EC" id="7.2.2.-" evidence="4"/>
<dbReference type="EMBL" id="D50453">
    <property type="protein sequence ID" value="BAA09014.1"/>
    <property type="molecule type" value="Genomic_DNA"/>
</dbReference>
<dbReference type="EMBL" id="AL009126">
    <property type="protein sequence ID" value="CAB12190.1"/>
    <property type="molecule type" value="Genomic_DNA"/>
</dbReference>
<dbReference type="PIR" id="D69763">
    <property type="entry name" value="D69763"/>
</dbReference>
<dbReference type="RefSeq" id="WP_003234487.1">
    <property type="nucleotide sequence ID" value="NZ_OZ025638.1"/>
</dbReference>
<dbReference type="SMR" id="P94420"/>
<dbReference type="FunCoup" id="P94420">
    <property type="interactions" value="183"/>
</dbReference>
<dbReference type="STRING" id="224308.BSU03820"/>
<dbReference type="PaxDb" id="224308-BSU03820"/>
<dbReference type="EnsemblBacteria" id="CAB12190">
    <property type="protein sequence ID" value="CAB12190"/>
    <property type="gene ID" value="BSU_03820"/>
</dbReference>
<dbReference type="GeneID" id="938278"/>
<dbReference type="KEGG" id="bsu:BSU03820"/>
<dbReference type="PATRIC" id="fig|224308.179.peg.405"/>
<dbReference type="eggNOG" id="COG4604">
    <property type="taxonomic scope" value="Bacteria"/>
</dbReference>
<dbReference type="InParanoid" id="P94420"/>
<dbReference type="OrthoDB" id="9787851at2"/>
<dbReference type="PhylomeDB" id="P94420"/>
<dbReference type="BioCyc" id="BSUB:BSU03820-MONOMER"/>
<dbReference type="Proteomes" id="UP000001570">
    <property type="component" value="Chromosome"/>
</dbReference>
<dbReference type="GO" id="GO:0005886">
    <property type="term" value="C:plasma membrane"/>
    <property type="evidence" value="ECO:0007669"/>
    <property type="project" value="UniProtKB-SubCell"/>
</dbReference>
<dbReference type="GO" id="GO:0005524">
    <property type="term" value="F:ATP binding"/>
    <property type="evidence" value="ECO:0007669"/>
    <property type="project" value="UniProtKB-KW"/>
</dbReference>
<dbReference type="GO" id="GO:0016887">
    <property type="term" value="F:ATP hydrolysis activity"/>
    <property type="evidence" value="ECO:0007669"/>
    <property type="project" value="InterPro"/>
</dbReference>
<dbReference type="GO" id="GO:0006826">
    <property type="term" value="P:iron ion transport"/>
    <property type="evidence" value="ECO:0007669"/>
    <property type="project" value="UniProtKB-KW"/>
</dbReference>
<dbReference type="CDD" id="cd03214">
    <property type="entry name" value="ABC_Iron-Siderophores_B12_Hemin"/>
    <property type="match status" value="1"/>
</dbReference>
<dbReference type="FunFam" id="3.40.50.300:FF:000134">
    <property type="entry name" value="Iron-enterobactin ABC transporter ATP-binding protein"/>
    <property type="match status" value="1"/>
</dbReference>
<dbReference type="Gene3D" id="3.40.50.300">
    <property type="entry name" value="P-loop containing nucleotide triphosphate hydrolases"/>
    <property type="match status" value="1"/>
</dbReference>
<dbReference type="InterPro" id="IPR003593">
    <property type="entry name" value="AAA+_ATPase"/>
</dbReference>
<dbReference type="InterPro" id="IPR003439">
    <property type="entry name" value="ABC_transporter-like_ATP-bd"/>
</dbReference>
<dbReference type="InterPro" id="IPR017871">
    <property type="entry name" value="ABC_transporter-like_CS"/>
</dbReference>
<dbReference type="InterPro" id="IPR027417">
    <property type="entry name" value="P-loop_NTPase"/>
</dbReference>
<dbReference type="InterPro" id="IPR051535">
    <property type="entry name" value="Siderophore_ABC-ATPase"/>
</dbReference>
<dbReference type="PANTHER" id="PTHR42771">
    <property type="entry name" value="IRON(3+)-HYDROXAMATE IMPORT ATP-BINDING PROTEIN FHUC"/>
    <property type="match status" value="1"/>
</dbReference>
<dbReference type="PANTHER" id="PTHR42771:SF3">
    <property type="entry name" value="PETROBACTIN IMPORT ATP-BINDING PROTEIN YCLP"/>
    <property type="match status" value="1"/>
</dbReference>
<dbReference type="Pfam" id="PF00005">
    <property type="entry name" value="ABC_tran"/>
    <property type="match status" value="1"/>
</dbReference>
<dbReference type="SMART" id="SM00382">
    <property type="entry name" value="AAA"/>
    <property type="match status" value="1"/>
</dbReference>
<dbReference type="SUPFAM" id="SSF52540">
    <property type="entry name" value="P-loop containing nucleoside triphosphate hydrolases"/>
    <property type="match status" value="1"/>
</dbReference>
<dbReference type="PROSITE" id="PS00211">
    <property type="entry name" value="ABC_TRANSPORTER_1"/>
    <property type="match status" value="1"/>
</dbReference>
<dbReference type="PROSITE" id="PS50893">
    <property type="entry name" value="ABC_TRANSPORTER_2"/>
    <property type="match status" value="1"/>
</dbReference>
<protein>
    <recommendedName>
        <fullName evidence="3">Petrobactin import ATP-binding protein YclP</fullName>
        <ecNumber evidence="4">7.2.2.-</ecNumber>
    </recommendedName>
</protein>
<name>YCLP_BACSU</name>
<accession>P94420</accession>
<accession>Q797P0</accession>
<sequence>MVEVRNVSKQYGGKVVLEETSVTIQKGKITSFIGPNGAGKSTLLSIMSRLIKKDSGEIYIDGQEIGACDSKELAKKMSILKQANQINIRLTIKDLVSFGRFPYSQGRLTEEDWVHINQALSYMKLEDIQDKYLDQLSGGQCQRAFIAMVIAQDTDYIFLDEPLNNLDMKHSVEIMKLLKRLVEELGKTIVIVIHDINFASVYSDYIVALKNGRIVKEGPPEEMIETSVLEEIYDMTIPIQTIDNQRIGVYFS</sequence>
<feature type="chain" id="PRO_0000359512" description="Petrobactin import ATP-binding protein YclP">
    <location>
        <begin position="1"/>
        <end position="252"/>
    </location>
</feature>
<feature type="domain" description="ABC transporter" evidence="1">
    <location>
        <begin position="2"/>
        <end position="236"/>
    </location>
</feature>
<feature type="binding site" evidence="1">
    <location>
        <begin position="34"/>
        <end position="41"/>
    </location>
    <ligand>
        <name>ATP</name>
        <dbReference type="ChEBI" id="CHEBI:30616"/>
    </ligand>
</feature>
<reference key="1">
    <citation type="journal article" date="1996" name="Microbiology">
        <title>The 25 degrees-36 degrees region of the Bacillus subtilis chromosome: determination of the sequence of a 146 kb segment and identification of 113 genes.</title>
        <authorList>
            <person name="Yamane K."/>
            <person name="Kumano M."/>
            <person name="Kurita K."/>
        </authorList>
    </citation>
    <scope>NUCLEOTIDE SEQUENCE [GENOMIC DNA]</scope>
    <source>
        <strain>168</strain>
    </source>
</reference>
<reference key="2">
    <citation type="journal article" date="1997" name="Nature">
        <title>The complete genome sequence of the Gram-positive bacterium Bacillus subtilis.</title>
        <authorList>
            <person name="Kunst F."/>
            <person name="Ogasawara N."/>
            <person name="Moszer I."/>
            <person name="Albertini A.M."/>
            <person name="Alloni G."/>
            <person name="Azevedo V."/>
            <person name="Bertero M.G."/>
            <person name="Bessieres P."/>
            <person name="Bolotin A."/>
            <person name="Borchert S."/>
            <person name="Borriss R."/>
            <person name="Boursier L."/>
            <person name="Brans A."/>
            <person name="Braun M."/>
            <person name="Brignell S.C."/>
            <person name="Bron S."/>
            <person name="Brouillet S."/>
            <person name="Bruschi C.V."/>
            <person name="Caldwell B."/>
            <person name="Capuano V."/>
            <person name="Carter N.M."/>
            <person name="Choi S.-K."/>
            <person name="Codani J.-J."/>
            <person name="Connerton I.F."/>
            <person name="Cummings N.J."/>
            <person name="Daniel R.A."/>
            <person name="Denizot F."/>
            <person name="Devine K.M."/>
            <person name="Duesterhoeft A."/>
            <person name="Ehrlich S.D."/>
            <person name="Emmerson P.T."/>
            <person name="Entian K.-D."/>
            <person name="Errington J."/>
            <person name="Fabret C."/>
            <person name="Ferrari E."/>
            <person name="Foulger D."/>
            <person name="Fritz C."/>
            <person name="Fujita M."/>
            <person name="Fujita Y."/>
            <person name="Fuma S."/>
            <person name="Galizzi A."/>
            <person name="Galleron N."/>
            <person name="Ghim S.-Y."/>
            <person name="Glaser P."/>
            <person name="Goffeau A."/>
            <person name="Golightly E.J."/>
            <person name="Grandi G."/>
            <person name="Guiseppi G."/>
            <person name="Guy B.J."/>
            <person name="Haga K."/>
            <person name="Haiech J."/>
            <person name="Harwood C.R."/>
            <person name="Henaut A."/>
            <person name="Hilbert H."/>
            <person name="Holsappel S."/>
            <person name="Hosono S."/>
            <person name="Hullo M.-F."/>
            <person name="Itaya M."/>
            <person name="Jones L.-M."/>
            <person name="Joris B."/>
            <person name="Karamata D."/>
            <person name="Kasahara Y."/>
            <person name="Klaerr-Blanchard M."/>
            <person name="Klein C."/>
            <person name="Kobayashi Y."/>
            <person name="Koetter P."/>
            <person name="Koningstein G."/>
            <person name="Krogh S."/>
            <person name="Kumano M."/>
            <person name="Kurita K."/>
            <person name="Lapidus A."/>
            <person name="Lardinois S."/>
            <person name="Lauber J."/>
            <person name="Lazarevic V."/>
            <person name="Lee S.-M."/>
            <person name="Levine A."/>
            <person name="Liu H."/>
            <person name="Masuda S."/>
            <person name="Mauel C."/>
            <person name="Medigue C."/>
            <person name="Medina N."/>
            <person name="Mellado R.P."/>
            <person name="Mizuno M."/>
            <person name="Moestl D."/>
            <person name="Nakai S."/>
            <person name="Noback M."/>
            <person name="Noone D."/>
            <person name="O'Reilly M."/>
            <person name="Ogawa K."/>
            <person name="Ogiwara A."/>
            <person name="Oudega B."/>
            <person name="Park S.-H."/>
            <person name="Parro V."/>
            <person name="Pohl T.M."/>
            <person name="Portetelle D."/>
            <person name="Porwollik S."/>
            <person name="Prescott A.M."/>
            <person name="Presecan E."/>
            <person name="Pujic P."/>
            <person name="Purnelle B."/>
            <person name="Rapoport G."/>
            <person name="Rey M."/>
            <person name="Reynolds S."/>
            <person name="Rieger M."/>
            <person name="Rivolta C."/>
            <person name="Rocha E."/>
            <person name="Roche B."/>
            <person name="Rose M."/>
            <person name="Sadaie Y."/>
            <person name="Sato T."/>
            <person name="Scanlan E."/>
            <person name="Schleich S."/>
            <person name="Schroeter R."/>
            <person name="Scoffone F."/>
            <person name="Sekiguchi J."/>
            <person name="Sekowska A."/>
            <person name="Seror S.J."/>
            <person name="Serror P."/>
            <person name="Shin B.-S."/>
            <person name="Soldo B."/>
            <person name="Sorokin A."/>
            <person name="Tacconi E."/>
            <person name="Takagi T."/>
            <person name="Takahashi H."/>
            <person name="Takemaru K."/>
            <person name="Takeuchi M."/>
            <person name="Tamakoshi A."/>
            <person name="Tanaka T."/>
            <person name="Terpstra P."/>
            <person name="Tognoni A."/>
            <person name="Tosato V."/>
            <person name="Uchiyama S."/>
            <person name="Vandenbol M."/>
            <person name="Vannier F."/>
            <person name="Vassarotti A."/>
            <person name="Viari A."/>
            <person name="Wambutt R."/>
            <person name="Wedler E."/>
            <person name="Wedler H."/>
            <person name="Weitzenegger T."/>
            <person name="Winters P."/>
            <person name="Wipat A."/>
            <person name="Yamamoto H."/>
            <person name="Yamane K."/>
            <person name="Yasumoto K."/>
            <person name="Yata K."/>
            <person name="Yoshida K."/>
            <person name="Yoshikawa H.-F."/>
            <person name="Zumstein E."/>
            <person name="Yoshikawa H."/>
            <person name="Danchin A."/>
        </authorList>
    </citation>
    <scope>NUCLEOTIDE SEQUENCE [LARGE SCALE GENOMIC DNA]</scope>
    <source>
        <strain>168</strain>
    </source>
</reference>
<reference key="3">
    <citation type="journal article" date="2009" name="Proc. Natl. Acad. Sci. U.S.A.">
        <title>Characterization of a Bacillus subtilis transporter for petrobactin, an anthrax stealth siderophore.</title>
        <authorList>
            <person name="Zawadzka A.M."/>
            <person name="Kim Y."/>
            <person name="Maltseva N."/>
            <person name="Nichiporuk R."/>
            <person name="Fan Y."/>
            <person name="Joachimiak A."/>
            <person name="Raymond K.N."/>
        </authorList>
    </citation>
    <scope>FUNCTION</scope>
    <scope>CATALYTIC ACTIVITY</scope>
    <scope>SUBUNIT</scope>
    <scope>DISRUPTION PHENOTYPE</scope>
    <source>
        <strain>168</strain>
    </source>
</reference>
<evidence type="ECO:0000255" key="1">
    <source>
        <dbReference type="PROSITE-ProRule" id="PRU00434"/>
    </source>
</evidence>
<evidence type="ECO:0000269" key="2">
    <source>
    </source>
</evidence>
<evidence type="ECO:0000305" key="3"/>
<evidence type="ECO:0000305" key="4">
    <source>
    </source>
</evidence>
<gene>
    <name type="primary">yclP</name>
    <name type="ordered locus">BSU03820</name>
</gene>
<organism>
    <name type="scientific">Bacillus subtilis (strain 168)</name>
    <dbReference type="NCBI Taxonomy" id="224308"/>
    <lineage>
        <taxon>Bacteria</taxon>
        <taxon>Bacillati</taxon>
        <taxon>Bacillota</taxon>
        <taxon>Bacilli</taxon>
        <taxon>Bacillales</taxon>
        <taxon>Bacillaceae</taxon>
        <taxon>Bacillus</taxon>
    </lineage>
</organism>
<proteinExistence type="evidence at protein level"/>
<keyword id="KW-0067">ATP-binding</keyword>
<keyword id="KW-1003">Cell membrane</keyword>
<keyword id="KW-0406">Ion transport</keyword>
<keyword id="KW-0408">Iron</keyword>
<keyword id="KW-0410">Iron transport</keyword>
<keyword id="KW-0472">Membrane</keyword>
<keyword id="KW-0547">Nucleotide-binding</keyword>
<keyword id="KW-1185">Reference proteome</keyword>
<keyword id="KW-1278">Translocase</keyword>
<keyword id="KW-0813">Transport</keyword>